<feature type="chain" id="PRO_1000125226" description="Glutamate 5-kinase">
    <location>
        <begin position="1"/>
        <end position="371"/>
    </location>
</feature>
<feature type="domain" description="PUA" evidence="1">
    <location>
        <begin position="274"/>
        <end position="352"/>
    </location>
</feature>
<feature type="binding site" evidence="1">
    <location>
        <position position="10"/>
    </location>
    <ligand>
        <name>ATP</name>
        <dbReference type="ChEBI" id="CHEBI:30616"/>
    </ligand>
</feature>
<feature type="binding site" evidence="1">
    <location>
        <position position="50"/>
    </location>
    <ligand>
        <name>substrate</name>
    </ligand>
</feature>
<feature type="binding site" evidence="1">
    <location>
        <position position="137"/>
    </location>
    <ligand>
        <name>substrate</name>
    </ligand>
</feature>
<feature type="binding site" evidence="1">
    <location>
        <position position="149"/>
    </location>
    <ligand>
        <name>substrate</name>
    </ligand>
</feature>
<feature type="binding site" evidence="1">
    <location>
        <begin position="169"/>
        <end position="170"/>
    </location>
    <ligand>
        <name>ATP</name>
        <dbReference type="ChEBI" id="CHEBI:30616"/>
    </ligand>
</feature>
<feature type="binding site" evidence="1">
    <location>
        <begin position="208"/>
        <end position="214"/>
    </location>
    <ligand>
        <name>ATP</name>
        <dbReference type="ChEBI" id="CHEBI:30616"/>
    </ligand>
</feature>
<gene>
    <name evidence="1" type="primary">proB</name>
    <name type="ordered locus">DICTH_0676</name>
</gene>
<dbReference type="EC" id="2.7.2.11" evidence="1"/>
<dbReference type="EMBL" id="CP001146">
    <property type="protein sequence ID" value="ACI19614.1"/>
    <property type="molecule type" value="Genomic_DNA"/>
</dbReference>
<dbReference type="RefSeq" id="WP_012548246.1">
    <property type="nucleotide sequence ID" value="NC_011297.1"/>
</dbReference>
<dbReference type="SMR" id="B5YDE1"/>
<dbReference type="STRING" id="309799.DICTH_0676"/>
<dbReference type="PaxDb" id="309799-DICTH_0676"/>
<dbReference type="KEGG" id="dth:DICTH_0676"/>
<dbReference type="eggNOG" id="COG0263">
    <property type="taxonomic scope" value="Bacteria"/>
</dbReference>
<dbReference type="HOGENOM" id="CLU_025400_2_0_0"/>
<dbReference type="OrthoDB" id="9804434at2"/>
<dbReference type="UniPathway" id="UPA00098">
    <property type="reaction ID" value="UER00359"/>
</dbReference>
<dbReference type="Proteomes" id="UP000001733">
    <property type="component" value="Chromosome"/>
</dbReference>
<dbReference type="GO" id="GO:0005829">
    <property type="term" value="C:cytosol"/>
    <property type="evidence" value="ECO:0007669"/>
    <property type="project" value="TreeGrafter"/>
</dbReference>
<dbReference type="GO" id="GO:0005524">
    <property type="term" value="F:ATP binding"/>
    <property type="evidence" value="ECO:0007669"/>
    <property type="project" value="UniProtKB-KW"/>
</dbReference>
<dbReference type="GO" id="GO:0004349">
    <property type="term" value="F:glutamate 5-kinase activity"/>
    <property type="evidence" value="ECO:0007669"/>
    <property type="project" value="UniProtKB-UniRule"/>
</dbReference>
<dbReference type="GO" id="GO:0003723">
    <property type="term" value="F:RNA binding"/>
    <property type="evidence" value="ECO:0007669"/>
    <property type="project" value="InterPro"/>
</dbReference>
<dbReference type="GO" id="GO:0055129">
    <property type="term" value="P:L-proline biosynthetic process"/>
    <property type="evidence" value="ECO:0007669"/>
    <property type="project" value="UniProtKB-UniRule"/>
</dbReference>
<dbReference type="CDD" id="cd04242">
    <property type="entry name" value="AAK_G5K_ProB"/>
    <property type="match status" value="1"/>
</dbReference>
<dbReference type="CDD" id="cd21157">
    <property type="entry name" value="PUA_G5K"/>
    <property type="match status" value="1"/>
</dbReference>
<dbReference type="FunFam" id="2.30.130.10:FF:000007">
    <property type="entry name" value="Glutamate 5-kinase"/>
    <property type="match status" value="1"/>
</dbReference>
<dbReference type="FunFam" id="3.40.1160.10:FF:000018">
    <property type="entry name" value="Glutamate 5-kinase"/>
    <property type="match status" value="1"/>
</dbReference>
<dbReference type="Gene3D" id="3.40.1160.10">
    <property type="entry name" value="Acetylglutamate kinase-like"/>
    <property type="match status" value="2"/>
</dbReference>
<dbReference type="Gene3D" id="2.30.130.10">
    <property type="entry name" value="PUA domain"/>
    <property type="match status" value="1"/>
</dbReference>
<dbReference type="HAMAP" id="MF_00456">
    <property type="entry name" value="ProB"/>
    <property type="match status" value="1"/>
</dbReference>
<dbReference type="InterPro" id="IPR036393">
    <property type="entry name" value="AceGlu_kinase-like_sf"/>
</dbReference>
<dbReference type="InterPro" id="IPR001048">
    <property type="entry name" value="Asp/Glu/Uridylate_kinase"/>
</dbReference>
<dbReference type="InterPro" id="IPR041739">
    <property type="entry name" value="G5K_ProB"/>
</dbReference>
<dbReference type="InterPro" id="IPR001057">
    <property type="entry name" value="Glu/AcGlu_kinase"/>
</dbReference>
<dbReference type="InterPro" id="IPR011529">
    <property type="entry name" value="Glu_5kinase"/>
</dbReference>
<dbReference type="InterPro" id="IPR005715">
    <property type="entry name" value="Glu_5kinase/COase_Synthase"/>
</dbReference>
<dbReference type="InterPro" id="IPR002478">
    <property type="entry name" value="PUA"/>
</dbReference>
<dbReference type="InterPro" id="IPR015947">
    <property type="entry name" value="PUA-like_sf"/>
</dbReference>
<dbReference type="InterPro" id="IPR036974">
    <property type="entry name" value="PUA_sf"/>
</dbReference>
<dbReference type="NCBIfam" id="TIGR01027">
    <property type="entry name" value="proB"/>
    <property type="match status" value="1"/>
</dbReference>
<dbReference type="PANTHER" id="PTHR43654">
    <property type="entry name" value="GLUTAMATE 5-KINASE"/>
    <property type="match status" value="1"/>
</dbReference>
<dbReference type="PANTHER" id="PTHR43654:SF1">
    <property type="entry name" value="ISOPENTENYL PHOSPHATE KINASE"/>
    <property type="match status" value="1"/>
</dbReference>
<dbReference type="Pfam" id="PF00696">
    <property type="entry name" value="AA_kinase"/>
    <property type="match status" value="1"/>
</dbReference>
<dbReference type="Pfam" id="PF01472">
    <property type="entry name" value="PUA"/>
    <property type="match status" value="1"/>
</dbReference>
<dbReference type="PIRSF" id="PIRSF000729">
    <property type="entry name" value="GK"/>
    <property type="match status" value="1"/>
</dbReference>
<dbReference type="PRINTS" id="PR00474">
    <property type="entry name" value="GLU5KINASE"/>
</dbReference>
<dbReference type="SMART" id="SM00359">
    <property type="entry name" value="PUA"/>
    <property type="match status" value="1"/>
</dbReference>
<dbReference type="SUPFAM" id="SSF53633">
    <property type="entry name" value="Carbamate kinase-like"/>
    <property type="match status" value="1"/>
</dbReference>
<dbReference type="SUPFAM" id="SSF88697">
    <property type="entry name" value="PUA domain-like"/>
    <property type="match status" value="1"/>
</dbReference>
<dbReference type="PROSITE" id="PS50890">
    <property type="entry name" value="PUA"/>
    <property type="match status" value="1"/>
</dbReference>
<organism>
    <name type="scientific">Dictyoglomus thermophilum (strain ATCC 35947 / DSM 3960 / H-6-12)</name>
    <dbReference type="NCBI Taxonomy" id="309799"/>
    <lineage>
        <taxon>Bacteria</taxon>
        <taxon>Pseudomonadati</taxon>
        <taxon>Dictyoglomota</taxon>
        <taxon>Dictyoglomia</taxon>
        <taxon>Dictyoglomales</taxon>
        <taxon>Dictyoglomaceae</taxon>
        <taxon>Dictyoglomus</taxon>
    </lineage>
</organism>
<reference key="1">
    <citation type="journal article" date="2014" name="Genome Announc.">
        <title>Complete Genome Sequence of the Extreme Thermophile Dictyoglomus thermophilum H-6-12.</title>
        <authorList>
            <person name="Coil D.A."/>
            <person name="Badger J.H."/>
            <person name="Forberger H.C."/>
            <person name="Riggs F."/>
            <person name="Madupu R."/>
            <person name="Fedorova N."/>
            <person name="Ward N."/>
            <person name="Robb F.T."/>
            <person name="Eisen J.A."/>
        </authorList>
    </citation>
    <scope>NUCLEOTIDE SEQUENCE [LARGE SCALE GENOMIC DNA]</scope>
    <source>
        <strain>ATCC 35947 / DSM 3960 / H-6-12</strain>
    </source>
</reference>
<sequence>MNDWKRIVVKVGTSSITDERGNPSGEKILSLVRECVKLMRANKEVVLVSSGAIASGREIMQKLSKRKDLPAKQALSAVGQVRLMQYYSQLFSIFKQPIAQILLTAEDLRDRKRYINISQTFETLIEEKVVPIVNENDTVAVEEIKIGDNDTLSAKVACAINADLLVILSDVEGLYSEDPNLSPNAVLIRDIYEIDEKIEKIAGPGKGTGGMYTKVQAAKIVTEAGIPMILAKADLENVLERIVLKKEKVGTMFYPVERHLNRRKHWMLFMAKPQGKVYIDDGAKDALLKKGKSLLPVGVKKIEGEFVRGDTVSILDLTGEEIGRGITNYDSSELERIKGKNTEEIKNILGEDFYEEVIHRNNLVLINRGDS</sequence>
<name>PROB_DICT6</name>
<evidence type="ECO:0000255" key="1">
    <source>
        <dbReference type="HAMAP-Rule" id="MF_00456"/>
    </source>
</evidence>
<accession>B5YDE1</accession>
<keyword id="KW-0028">Amino-acid biosynthesis</keyword>
<keyword id="KW-0067">ATP-binding</keyword>
<keyword id="KW-0963">Cytoplasm</keyword>
<keyword id="KW-0418">Kinase</keyword>
<keyword id="KW-0547">Nucleotide-binding</keyword>
<keyword id="KW-0641">Proline biosynthesis</keyword>
<keyword id="KW-0808">Transferase</keyword>
<protein>
    <recommendedName>
        <fullName evidence="1">Glutamate 5-kinase</fullName>
        <ecNumber evidence="1">2.7.2.11</ecNumber>
    </recommendedName>
    <alternativeName>
        <fullName evidence="1">Gamma-glutamyl kinase</fullName>
        <shortName evidence="1">GK</shortName>
    </alternativeName>
</protein>
<proteinExistence type="inferred from homology"/>
<comment type="function">
    <text evidence="1">Catalyzes the transfer of a phosphate group to glutamate to form L-glutamate 5-phosphate.</text>
</comment>
<comment type="catalytic activity">
    <reaction evidence="1">
        <text>L-glutamate + ATP = L-glutamyl 5-phosphate + ADP</text>
        <dbReference type="Rhea" id="RHEA:14877"/>
        <dbReference type="ChEBI" id="CHEBI:29985"/>
        <dbReference type="ChEBI" id="CHEBI:30616"/>
        <dbReference type="ChEBI" id="CHEBI:58274"/>
        <dbReference type="ChEBI" id="CHEBI:456216"/>
        <dbReference type="EC" id="2.7.2.11"/>
    </reaction>
</comment>
<comment type="pathway">
    <text evidence="1">Amino-acid biosynthesis; L-proline biosynthesis; L-glutamate 5-semialdehyde from L-glutamate: step 1/2.</text>
</comment>
<comment type="subcellular location">
    <subcellularLocation>
        <location evidence="1">Cytoplasm</location>
    </subcellularLocation>
</comment>
<comment type="similarity">
    <text evidence="1">Belongs to the glutamate 5-kinase family.</text>
</comment>